<reference key="1">
    <citation type="journal article" date="2000" name="Science">
        <title>The genome sequence of Drosophila melanogaster.</title>
        <authorList>
            <person name="Adams M.D."/>
            <person name="Celniker S.E."/>
            <person name="Holt R.A."/>
            <person name="Evans C.A."/>
            <person name="Gocayne J.D."/>
            <person name="Amanatides P.G."/>
            <person name="Scherer S.E."/>
            <person name="Li P.W."/>
            <person name="Hoskins R.A."/>
            <person name="Galle R.F."/>
            <person name="George R.A."/>
            <person name="Lewis S.E."/>
            <person name="Richards S."/>
            <person name="Ashburner M."/>
            <person name="Henderson S.N."/>
            <person name="Sutton G.G."/>
            <person name="Wortman J.R."/>
            <person name="Yandell M.D."/>
            <person name="Zhang Q."/>
            <person name="Chen L.X."/>
            <person name="Brandon R.C."/>
            <person name="Rogers Y.-H.C."/>
            <person name="Blazej R.G."/>
            <person name="Champe M."/>
            <person name="Pfeiffer B.D."/>
            <person name="Wan K.H."/>
            <person name="Doyle C."/>
            <person name="Baxter E.G."/>
            <person name="Helt G."/>
            <person name="Nelson C.R."/>
            <person name="Miklos G.L.G."/>
            <person name="Abril J.F."/>
            <person name="Agbayani A."/>
            <person name="An H.-J."/>
            <person name="Andrews-Pfannkoch C."/>
            <person name="Baldwin D."/>
            <person name="Ballew R.M."/>
            <person name="Basu A."/>
            <person name="Baxendale J."/>
            <person name="Bayraktaroglu L."/>
            <person name="Beasley E.M."/>
            <person name="Beeson K.Y."/>
            <person name="Benos P.V."/>
            <person name="Berman B.P."/>
            <person name="Bhandari D."/>
            <person name="Bolshakov S."/>
            <person name="Borkova D."/>
            <person name="Botchan M.R."/>
            <person name="Bouck J."/>
            <person name="Brokstein P."/>
            <person name="Brottier P."/>
            <person name="Burtis K.C."/>
            <person name="Busam D.A."/>
            <person name="Butler H."/>
            <person name="Cadieu E."/>
            <person name="Center A."/>
            <person name="Chandra I."/>
            <person name="Cherry J.M."/>
            <person name="Cawley S."/>
            <person name="Dahlke C."/>
            <person name="Davenport L.B."/>
            <person name="Davies P."/>
            <person name="de Pablos B."/>
            <person name="Delcher A."/>
            <person name="Deng Z."/>
            <person name="Mays A.D."/>
            <person name="Dew I."/>
            <person name="Dietz S.M."/>
            <person name="Dodson K."/>
            <person name="Doup L.E."/>
            <person name="Downes M."/>
            <person name="Dugan-Rocha S."/>
            <person name="Dunkov B.C."/>
            <person name="Dunn P."/>
            <person name="Durbin K.J."/>
            <person name="Evangelista C.C."/>
            <person name="Ferraz C."/>
            <person name="Ferriera S."/>
            <person name="Fleischmann W."/>
            <person name="Fosler C."/>
            <person name="Gabrielian A.E."/>
            <person name="Garg N.S."/>
            <person name="Gelbart W.M."/>
            <person name="Glasser K."/>
            <person name="Glodek A."/>
            <person name="Gong F."/>
            <person name="Gorrell J.H."/>
            <person name="Gu Z."/>
            <person name="Guan P."/>
            <person name="Harris M."/>
            <person name="Harris N.L."/>
            <person name="Harvey D.A."/>
            <person name="Heiman T.J."/>
            <person name="Hernandez J.R."/>
            <person name="Houck J."/>
            <person name="Hostin D."/>
            <person name="Houston K.A."/>
            <person name="Howland T.J."/>
            <person name="Wei M.-H."/>
            <person name="Ibegwam C."/>
            <person name="Jalali M."/>
            <person name="Kalush F."/>
            <person name="Karpen G.H."/>
            <person name="Ke Z."/>
            <person name="Kennison J.A."/>
            <person name="Ketchum K.A."/>
            <person name="Kimmel B.E."/>
            <person name="Kodira C.D."/>
            <person name="Kraft C.L."/>
            <person name="Kravitz S."/>
            <person name="Kulp D."/>
            <person name="Lai Z."/>
            <person name="Lasko P."/>
            <person name="Lei Y."/>
            <person name="Levitsky A.A."/>
            <person name="Li J.H."/>
            <person name="Li Z."/>
            <person name="Liang Y."/>
            <person name="Lin X."/>
            <person name="Liu X."/>
            <person name="Mattei B."/>
            <person name="McIntosh T.C."/>
            <person name="McLeod M.P."/>
            <person name="McPherson D."/>
            <person name="Merkulov G."/>
            <person name="Milshina N.V."/>
            <person name="Mobarry C."/>
            <person name="Morris J."/>
            <person name="Moshrefi A."/>
            <person name="Mount S.M."/>
            <person name="Moy M."/>
            <person name="Murphy B."/>
            <person name="Murphy L."/>
            <person name="Muzny D.M."/>
            <person name="Nelson D.L."/>
            <person name="Nelson D.R."/>
            <person name="Nelson K.A."/>
            <person name="Nixon K."/>
            <person name="Nusskern D.R."/>
            <person name="Pacleb J.M."/>
            <person name="Palazzolo M."/>
            <person name="Pittman G.S."/>
            <person name="Pan S."/>
            <person name="Pollard J."/>
            <person name="Puri V."/>
            <person name="Reese M.G."/>
            <person name="Reinert K."/>
            <person name="Remington K."/>
            <person name="Saunders R.D.C."/>
            <person name="Scheeler F."/>
            <person name="Shen H."/>
            <person name="Shue B.C."/>
            <person name="Siden-Kiamos I."/>
            <person name="Simpson M."/>
            <person name="Skupski M.P."/>
            <person name="Smith T.J."/>
            <person name="Spier E."/>
            <person name="Spradling A.C."/>
            <person name="Stapleton M."/>
            <person name="Strong R."/>
            <person name="Sun E."/>
            <person name="Svirskas R."/>
            <person name="Tector C."/>
            <person name="Turner R."/>
            <person name="Venter E."/>
            <person name="Wang A.H."/>
            <person name="Wang X."/>
            <person name="Wang Z.-Y."/>
            <person name="Wassarman D.A."/>
            <person name="Weinstock G.M."/>
            <person name="Weissenbach J."/>
            <person name="Williams S.M."/>
            <person name="Woodage T."/>
            <person name="Worley K.C."/>
            <person name="Wu D."/>
            <person name="Yang S."/>
            <person name="Yao Q.A."/>
            <person name="Ye J."/>
            <person name="Yeh R.-F."/>
            <person name="Zaveri J.S."/>
            <person name="Zhan M."/>
            <person name="Zhang G."/>
            <person name="Zhao Q."/>
            <person name="Zheng L."/>
            <person name="Zheng X.H."/>
            <person name="Zhong F.N."/>
            <person name="Zhong W."/>
            <person name="Zhou X."/>
            <person name="Zhu S.C."/>
            <person name="Zhu X."/>
            <person name="Smith H.O."/>
            <person name="Gibbs R.A."/>
            <person name="Myers E.W."/>
            <person name="Rubin G.M."/>
            <person name="Venter J.C."/>
        </authorList>
    </citation>
    <scope>NUCLEOTIDE SEQUENCE [LARGE SCALE GENOMIC DNA]</scope>
    <source>
        <strain>Berkeley</strain>
    </source>
</reference>
<reference key="2">
    <citation type="journal article" date="2002" name="Genome Biol.">
        <title>Annotation of the Drosophila melanogaster euchromatic genome: a systematic review.</title>
        <authorList>
            <person name="Misra S."/>
            <person name="Crosby M.A."/>
            <person name="Mungall C.J."/>
            <person name="Matthews B.B."/>
            <person name="Campbell K.S."/>
            <person name="Hradecky P."/>
            <person name="Huang Y."/>
            <person name="Kaminker J.S."/>
            <person name="Millburn G.H."/>
            <person name="Prochnik S.E."/>
            <person name="Smith C.D."/>
            <person name="Tupy J.L."/>
            <person name="Whitfield E.J."/>
            <person name="Bayraktaroglu L."/>
            <person name="Berman B.P."/>
            <person name="Bettencourt B.R."/>
            <person name="Celniker S.E."/>
            <person name="de Grey A.D.N.J."/>
            <person name="Drysdale R.A."/>
            <person name="Harris N.L."/>
            <person name="Richter J."/>
            <person name="Russo S."/>
            <person name="Schroeder A.J."/>
            <person name="Shu S.Q."/>
            <person name="Stapleton M."/>
            <person name="Yamada C."/>
            <person name="Ashburner M."/>
            <person name="Gelbart W.M."/>
            <person name="Rubin G.M."/>
            <person name="Lewis S.E."/>
        </authorList>
    </citation>
    <scope>GENOME REANNOTATION</scope>
    <source>
        <strain>Berkeley</strain>
    </source>
</reference>
<reference key="3">
    <citation type="submission" date="2007-11" db="EMBL/GenBank/DDBJ databases">
        <authorList>
            <person name="Stapleton M."/>
            <person name="Carlson J."/>
            <person name="Frise E."/>
            <person name="Kapadia B."/>
            <person name="Park S."/>
            <person name="Wan K."/>
            <person name="Yu C."/>
            <person name="Celniker S."/>
        </authorList>
    </citation>
    <scope>NUCLEOTIDE SEQUENCE [LARGE SCALE MRNA]</scope>
    <source>
        <strain>Berkeley</strain>
    </source>
</reference>
<reference key="4">
    <citation type="journal article" date="2013" name="Mol. Cell">
        <title>Structure of the PAN3 pseudokinase reveals the basis for interactions with the PAN2 deadenylase and the GW182 proteins.</title>
        <authorList>
            <person name="Christie M."/>
            <person name="Boland A."/>
            <person name="Huntzinger E."/>
            <person name="Weichenrieder O."/>
            <person name="Izaurralde E."/>
        </authorList>
    </citation>
    <scope>INTERACTION WITH PAN3</scope>
    <scope>SUBUNIT</scope>
    <source>
        <tissue>Larva</tissue>
        <tissue>Pupae</tissue>
    </source>
</reference>
<reference key="5">
    <citation type="journal article" date="2014" name="Nat. Struct. Mol. Biol.">
        <title>An asymmetric PAN3 dimer recruits a single PAN2 exonuclease to mediate mRNA deadenylation and decay.</title>
        <authorList>
            <person name="Jonas S."/>
            <person name="Christie M."/>
            <person name="Peter D."/>
            <person name="Bhandari D."/>
            <person name="Loh B."/>
            <person name="Huntzinger E."/>
            <person name="Weichenrieder O."/>
            <person name="Izaurralde E."/>
        </authorList>
    </citation>
    <scope>CATALYTIC ACTIVITY</scope>
</reference>
<reference key="6">
    <citation type="journal article" date="2019" name="Nucleic Acids Res.">
        <title>Direct role for the Drosophila GIGYF protein in 4EHP-mediated mRNA repression.</title>
        <authorList>
            <person name="Ruscica V."/>
            <person name="Bawankar P."/>
            <person name="Peter D."/>
            <person name="Helms S."/>
            <person name="Igreja C."/>
            <person name="Izaurralde E."/>
        </authorList>
    </citation>
    <scope>INTERACTION WITH GYF</scope>
</reference>
<feature type="chain" id="PRO_0000441673" description="PAN2-PAN3 deadenylation complex catalytic subunit PAN2">
    <location>
        <begin position="1"/>
        <end position="1241"/>
    </location>
</feature>
<feature type="domain" description="USP" evidence="1">
    <location>
        <begin position="474"/>
        <end position="966"/>
    </location>
</feature>
<feature type="domain" description="Exonuclease" evidence="1">
    <location>
        <begin position="1036"/>
        <end position="1208"/>
    </location>
</feature>
<feature type="region of interest" description="Linker" evidence="1">
    <location>
        <begin position="359"/>
        <end position="473"/>
    </location>
</feature>
<feature type="region of interest" description="Disordered" evidence="2">
    <location>
        <begin position="626"/>
        <end position="666"/>
    </location>
</feature>
<feature type="region of interest" description="Disordered" evidence="2">
    <location>
        <begin position="817"/>
        <end position="838"/>
    </location>
</feature>
<feature type="region of interest" description="Disordered" evidence="2">
    <location>
        <begin position="857"/>
        <end position="884"/>
    </location>
</feature>
<feature type="region of interest" description="Disordered" evidence="2">
    <location>
        <begin position="971"/>
        <end position="1000"/>
    </location>
</feature>
<feature type="compositionally biased region" description="Polar residues" evidence="2">
    <location>
        <begin position="626"/>
        <end position="648"/>
    </location>
</feature>
<feature type="compositionally biased region" description="Basic and acidic residues" evidence="2">
    <location>
        <begin position="655"/>
        <end position="666"/>
    </location>
</feature>
<feature type="compositionally biased region" description="Polar residues" evidence="2">
    <location>
        <begin position="822"/>
        <end position="838"/>
    </location>
</feature>
<feature type="compositionally biased region" description="Low complexity" evidence="2">
    <location>
        <begin position="972"/>
        <end position="981"/>
    </location>
</feature>
<feature type="binding site" evidence="1">
    <location>
        <position position="1039"/>
    </location>
    <ligand>
        <name>a divalent metal cation</name>
        <dbReference type="ChEBI" id="CHEBI:60240"/>
        <note>catalytic</note>
    </ligand>
</feature>
<feature type="binding site" evidence="1">
    <location>
        <position position="1041"/>
    </location>
    <ligand>
        <name>a divalent metal cation</name>
        <dbReference type="ChEBI" id="CHEBI:60240"/>
        <note>catalytic</note>
    </ligand>
</feature>
<feature type="binding site" evidence="1">
    <location>
        <position position="1148"/>
    </location>
    <ligand>
        <name>a divalent metal cation</name>
        <dbReference type="ChEBI" id="CHEBI:60240"/>
        <note>catalytic</note>
    </ligand>
</feature>
<feature type="binding site" evidence="1">
    <location>
        <position position="1200"/>
    </location>
    <ligand>
        <name>a divalent metal cation</name>
        <dbReference type="ChEBI" id="CHEBI:60240"/>
        <note>catalytic</note>
    </ligand>
</feature>
<dbReference type="EC" id="3.1.13.4" evidence="1"/>
<dbReference type="EMBL" id="AE013599">
    <property type="protein sequence ID" value="AAF59018.2"/>
    <property type="molecule type" value="Genomic_DNA"/>
</dbReference>
<dbReference type="EMBL" id="BT031142">
    <property type="protein sequence ID" value="ABX00764.1"/>
    <property type="molecule type" value="mRNA"/>
</dbReference>
<dbReference type="RefSeq" id="NP_610427.2">
    <property type="nucleotide sequence ID" value="NM_136583.4"/>
</dbReference>
<dbReference type="SMR" id="A1Z7K9"/>
<dbReference type="FunCoup" id="A1Z7K9">
    <property type="interactions" value="1587"/>
</dbReference>
<dbReference type="IntAct" id="A1Z7K9">
    <property type="interactions" value="3"/>
</dbReference>
<dbReference type="STRING" id="7227.FBpp0087735"/>
<dbReference type="PaxDb" id="7227-FBpp0087735"/>
<dbReference type="DNASU" id="35893"/>
<dbReference type="EnsemblMetazoa" id="FBtr0088654">
    <property type="protein sequence ID" value="FBpp0087735"/>
    <property type="gene ID" value="FBgn0033352"/>
</dbReference>
<dbReference type="GeneID" id="35893"/>
<dbReference type="KEGG" id="dme:Dmel_CG8232"/>
<dbReference type="UCSC" id="CG8232-RA">
    <property type="organism name" value="d. melanogaster"/>
</dbReference>
<dbReference type="AGR" id="FB:FBgn0033352"/>
<dbReference type="CTD" id="9924"/>
<dbReference type="FlyBase" id="FBgn0033352">
    <property type="gene designation" value="PAN2"/>
</dbReference>
<dbReference type="VEuPathDB" id="VectorBase:FBgn0033352"/>
<dbReference type="eggNOG" id="KOG1275">
    <property type="taxonomic scope" value="Eukaryota"/>
</dbReference>
<dbReference type="HOGENOM" id="CLU_002369_0_0_1"/>
<dbReference type="InParanoid" id="A1Z7K9"/>
<dbReference type="OMA" id="TQELLWT"/>
<dbReference type="OrthoDB" id="16516at2759"/>
<dbReference type="PhylomeDB" id="A1Z7K9"/>
<dbReference type="BioGRID-ORCS" id="35893">
    <property type="hits" value="0 hits in 1 CRISPR screen"/>
</dbReference>
<dbReference type="ChiTaRS" id="PAN2">
    <property type="organism name" value="fly"/>
</dbReference>
<dbReference type="GenomeRNAi" id="35893"/>
<dbReference type="PRO" id="PR:A1Z7K9"/>
<dbReference type="Proteomes" id="UP000000803">
    <property type="component" value="Chromosome 2R"/>
</dbReference>
<dbReference type="Bgee" id="FBgn0033352">
    <property type="expression patterns" value="Expressed in eye disc (Drosophila) and 123 other cell types or tissues"/>
</dbReference>
<dbReference type="ExpressionAtlas" id="A1Z7K9">
    <property type="expression patterns" value="baseline and differential"/>
</dbReference>
<dbReference type="GO" id="GO:0005634">
    <property type="term" value="C:nucleus"/>
    <property type="evidence" value="ECO:0007669"/>
    <property type="project" value="UniProtKB-SubCell"/>
</dbReference>
<dbReference type="GO" id="GO:0000932">
    <property type="term" value="C:P-body"/>
    <property type="evidence" value="ECO:0000318"/>
    <property type="project" value="GO_Central"/>
</dbReference>
<dbReference type="GO" id="GO:0031251">
    <property type="term" value="C:PAN complex"/>
    <property type="evidence" value="ECO:0000250"/>
    <property type="project" value="FlyBase"/>
</dbReference>
<dbReference type="GO" id="GO:0046872">
    <property type="term" value="F:metal ion binding"/>
    <property type="evidence" value="ECO:0007669"/>
    <property type="project" value="UniProtKB-KW"/>
</dbReference>
<dbReference type="GO" id="GO:0000900">
    <property type="term" value="F:mRNA regulatory element binding translation repressor activity"/>
    <property type="evidence" value="ECO:0000315"/>
    <property type="project" value="UniProtKB"/>
</dbReference>
<dbReference type="GO" id="GO:0003676">
    <property type="term" value="F:nucleic acid binding"/>
    <property type="evidence" value="ECO:0007669"/>
    <property type="project" value="InterPro"/>
</dbReference>
<dbReference type="GO" id="GO:0004535">
    <property type="term" value="F:poly(A)-specific ribonuclease activity"/>
    <property type="evidence" value="ECO:0000250"/>
    <property type="project" value="FlyBase"/>
</dbReference>
<dbReference type="GO" id="GO:0006397">
    <property type="term" value="P:mRNA processing"/>
    <property type="evidence" value="ECO:0007669"/>
    <property type="project" value="UniProtKB-KW"/>
</dbReference>
<dbReference type="GO" id="GO:0000289">
    <property type="term" value="P:nuclear-transcribed mRNA poly(A) tail shortening"/>
    <property type="evidence" value="ECO:0000316"/>
    <property type="project" value="FlyBase"/>
</dbReference>
<dbReference type="GO" id="GO:0010606">
    <property type="term" value="P:positive regulation of cytoplasmic mRNA processing body assembly"/>
    <property type="evidence" value="ECO:0007669"/>
    <property type="project" value="UniProtKB-UniRule"/>
</dbReference>
<dbReference type="CDD" id="cd06143">
    <property type="entry name" value="PAN2_exo"/>
    <property type="match status" value="1"/>
</dbReference>
<dbReference type="FunFam" id="2.130.10.10:FF:000421">
    <property type="entry name" value="PAN2-PAN3 deadenylation complex catalytic subunit PAN2"/>
    <property type="match status" value="1"/>
</dbReference>
<dbReference type="FunFam" id="3.30.420.10:FF:000011">
    <property type="entry name" value="PAN2-PAN3 deadenylation complex catalytic subunit PAN2"/>
    <property type="match status" value="1"/>
</dbReference>
<dbReference type="Gene3D" id="3.90.70.10">
    <property type="entry name" value="Cysteine proteinases"/>
    <property type="match status" value="1"/>
</dbReference>
<dbReference type="Gene3D" id="3.30.420.10">
    <property type="entry name" value="Ribonuclease H-like superfamily/Ribonuclease H"/>
    <property type="match status" value="1"/>
</dbReference>
<dbReference type="Gene3D" id="2.130.10.10">
    <property type="entry name" value="YVTN repeat-like/Quinoprotein amine dehydrogenase"/>
    <property type="match status" value="1"/>
</dbReference>
<dbReference type="HAMAP" id="MF_03182">
    <property type="entry name" value="PAN2"/>
    <property type="match status" value="1"/>
</dbReference>
<dbReference type="InterPro" id="IPR013520">
    <property type="entry name" value="Exonuclease_RNaseT/DNA_pol3"/>
</dbReference>
<dbReference type="InterPro" id="IPR030843">
    <property type="entry name" value="PAN2"/>
</dbReference>
<dbReference type="InterPro" id="IPR050785">
    <property type="entry name" value="PAN2-PAN3_catalytic_subunit"/>
</dbReference>
<dbReference type="InterPro" id="IPR048841">
    <property type="entry name" value="PAN2_N"/>
</dbReference>
<dbReference type="InterPro" id="IPR028881">
    <property type="entry name" value="PAN2_UCH_dom"/>
</dbReference>
<dbReference type="InterPro" id="IPR038765">
    <property type="entry name" value="Papain-like_cys_pep_sf"/>
</dbReference>
<dbReference type="InterPro" id="IPR012337">
    <property type="entry name" value="RNaseH-like_sf"/>
</dbReference>
<dbReference type="InterPro" id="IPR036397">
    <property type="entry name" value="RNaseH_sf"/>
</dbReference>
<dbReference type="InterPro" id="IPR028889">
    <property type="entry name" value="USP_dom"/>
</dbReference>
<dbReference type="InterPro" id="IPR015943">
    <property type="entry name" value="WD40/YVTN_repeat-like_dom_sf"/>
</dbReference>
<dbReference type="InterPro" id="IPR036322">
    <property type="entry name" value="WD40_repeat_dom_sf"/>
</dbReference>
<dbReference type="PANTHER" id="PTHR15728">
    <property type="entry name" value="DEADENYLATION COMPLEX CATALYTIC SUBUNIT PAN2"/>
    <property type="match status" value="1"/>
</dbReference>
<dbReference type="PANTHER" id="PTHR15728:SF0">
    <property type="entry name" value="PAN2-PAN3 DEADENYLATION COMPLEX CATALYTIC SUBUNIT PAN2"/>
    <property type="match status" value="1"/>
</dbReference>
<dbReference type="Pfam" id="PF20770">
    <property type="entry name" value="PAN2_N"/>
    <property type="match status" value="1"/>
</dbReference>
<dbReference type="Pfam" id="PF00929">
    <property type="entry name" value="RNase_T"/>
    <property type="match status" value="1"/>
</dbReference>
<dbReference type="Pfam" id="PF13423">
    <property type="entry name" value="UCH_1"/>
    <property type="match status" value="1"/>
</dbReference>
<dbReference type="SMART" id="SM00479">
    <property type="entry name" value="EXOIII"/>
    <property type="match status" value="1"/>
</dbReference>
<dbReference type="SUPFAM" id="SSF54001">
    <property type="entry name" value="Cysteine proteinases"/>
    <property type="match status" value="1"/>
</dbReference>
<dbReference type="SUPFAM" id="SSF53098">
    <property type="entry name" value="Ribonuclease H-like"/>
    <property type="match status" value="1"/>
</dbReference>
<dbReference type="SUPFAM" id="SSF50978">
    <property type="entry name" value="WD40 repeat-like"/>
    <property type="match status" value="1"/>
</dbReference>
<dbReference type="PROSITE" id="PS50235">
    <property type="entry name" value="USP_3"/>
    <property type="match status" value="1"/>
</dbReference>
<protein>
    <recommendedName>
        <fullName evidence="1">PAN2-PAN3 deadenylation complex catalytic subunit PAN2</fullName>
        <ecNumber evidence="1">3.1.13.4</ecNumber>
    </recommendedName>
    <alternativeName>
        <fullName evidence="1">PAB1P-dependent poly(A)-specific ribonuclease</fullName>
    </alternativeName>
    <alternativeName>
        <fullName evidence="1">Poly(A)-nuclease deadenylation complex subunit 2</fullName>
        <shortName evidence="1">PAN deadenylation complex subunit 2</shortName>
    </alternativeName>
</protein>
<name>PAN2_DROME</name>
<sequence>MDYVYCGTDPIGASEDILSVYDAGSAPGNGHFSPSFNGFNIGTTDPEYVELVPVLADGGEHFGVSSVAFDDYEELLWMGNQGGHVTSYYTNSMQKYTSFQVHATDIVRDISTLDSGVLALTQTSLRHQIRRGLPKFTFKSNNMKEMVSMLQLSPHRLVMAGLQDELIDFDLRTLKETRIEHVGAGGCTVLRKNSRYLFAGDQLGTVTLRDLNSLSVQHTIKTHTNILSDFSVQGNLLISCGYSGRQNNLAIDRFLMVYDLRMLRLIAPIQVMIDPQMLKFLPSLTSQLAVVSSYGQVQLVDTVELSEPRVSMYQINTNGSQCLSFDISSSSQAMAFGDQSGHINMIAAVQTPQPQFNLYSRSTEFADVVPQLPMVSITDTNFPLSSVMLPHLTTGTQWFSDWPEELLRYRYHRPKTIDPEVLSNMKMQGPIGYSPNPRTARRNQIPYVIEQGGVCSPNGNGTAAATKAENGVKIIPRRYRKVELKYTKLGTQDFDFDQHNQTCFAGLEATLPNSYCNAMLQILYFTDALRVKLLEHSCIKEFCLSCELGFLFNMLDKSTASSPCQASNFLRSFRTVPEASALGLILTDRSSNVNLISLIQNWNRFILHQMHYEIFDSSKNASTYSGSVQTSTNAENAGSSETSGSSDLYDSISDENSKEDDRERSKINAETDISKIFGTKQICINRCIKCQEEKIKESILLACNLSYPNHIKDSDQYFNFGTILKRSLSSEKSIQAFCERCKKFSPTNQSVKVTSLPQILSINCGLNNEKDITFLKRQLNRCSEKTTVDAAASLSTSKPCRYGANCSRSDCHFMHPDRKSPSHTSQPNAVNNSPNGRQKSWFPLTFTMGINDQGEVQVQTQSDASSGKSEQEEETEKPPTKGLDNNRMYALHAVVCQVDDGTQKNLVSLINVQRPYHTMKLAESADDPQSQWYIFNDFSISPVSPQESVWFTLDWKVPCILFYRHVEDDSESASTTSSTVTESEETIPSESSSGSPTNLSNPFLEEIVSPMLGNLSADATLQPLQSDEMPQSGDLVAMDAEFVTLNPEENEIRPDGKTATIKPCHMSVARISCIRGQGPAEGVPFMDDYISTQEKVVDYLTQFSGIKPGDLDANFSKKRLTALKYSYQKLKYLVDVGVIFVGHGLKNDFRVINIYVPSEQIIDTVHLFHMPHHRMVSLRFLAWHFLGTKIQSETHDSIEDARTTLQLYKHYLKLQEEKKFANALKNLYERGKQLQWKVPED</sequence>
<evidence type="ECO:0000255" key="1">
    <source>
        <dbReference type="HAMAP-Rule" id="MF_03182"/>
    </source>
</evidence>
<evidence type="ECO:0000256" key="2">
    <source>
        <dbReference type="SAM" id="MobiDB-lite"/>
    </source>
</evidence>
<evidence type="ECO:0000269" key="3">
    <source>
    </source>
</evidence>
<evidence type="ECO:0000269" key="4">
    <source>
    </source>
</evidence>
<evidence type="ECO:0000269" key="5">
    <source>
    </source>
</evidence>
<accession>A1Z7K9</accession>
<gene>
    <name evidence="1" type="primary">PAN2</name>
    <name type="ORF">CG8232</name>
</gene>
<comment type="function">
    <text evidence="1">Catalytic subunit of the poly(A)-nuclease (PAN) deadenylation complex, one of two cytoplasmic mRNA deadenylases involved in general and miRNA-mediated mRNA turnover. PAN specifically shortens poly(A) tails of RNA and the activity is stimulated by poly(A)-binding protein (PABP). PAN deadenylation is followed by rapid degradation of the shortened mRNA tails by the CCR4-NOT complex. Deadenylated mRNAs are then degraded by two alternative mechanisms, namely exosome-mediated 3'-5' exonucleolytic degradation, or deadenylation-dependent mRNA decaping and subsequent 5'-3' exonucleolytic degradation by XRN1.</text>
</comment>
<comment type="catalytic activity">
    <reaction evidence="1 4">
        <text>Exonucleolytic cleavage of poly(A) to 5'-AMP.</text>
        <dbReference type="EC" id="3.1.13.4"/>
    </reaction>
</comment>
<comment type="cofactor">
    <cofactor evidence="1">
        <name>a divalent metal cation</name>
        <dbReference type="ChEBI" id="CHEBI:60240"/>
    </cofactor>
    <text evidence="1">Binds 2 metal cations per subunit in the catalytic exonuclease domain.</text>
</comment>
<comment type="activity regulation">
    <text evidence="1">Positively regulated by the regulatory subunit PAN3.</text>
</comment>
<comment type="subunit">
    <text evidence="1 3 5">Forms a heterotrimer with an asymmetric homodimer of the regulatory subunit PAN3 to form the poly(A)-nuclease (PAN) deadenylation complex (By similarity) (PubMed:23932717). Interacts with Gyf (PubMed:31114929).</text>
</comment>
<comment type="interaction">
    <interactant intactId="EBI-193297">
        <id>A1Z7K9</id>
    </interactant>
    <interactant intactId="EBI-160693">
        <id>Q8SY33</id>
        <label>gw</label>
    </interactant>
    <organismsDiffer>false</organismsDiffer>
    <experiments>2</experiments>
</comment>
<comment type="interaction">
    <interactant intactId="EBI-193297">
        <id>A1Z7K9</id>
    </interactant>
    <interactant intactId="EBI-119468">
        <id>Q95RR8</id>
        <label>PAN3</label>
    </interactant>
    <organismsDiffer>false</organismsDiffer>
    <experiments>4</experiments>
</comment>
<comment type="subcellular location">
    <subcellularLocation>
        <location evidence="1">Cytoplasm</location>
        <location evidence="1">P-body</location>
    </subcellularLocation>
    <subcellularLocation>
        <location evidence="1">Nucleus</location>
    </subcellularLocation>
    <text evidence="1">Shuttles between nucleus and cytoplasm.</text>
</comment>
<comment type="domain">
    <text evidence="1">Contains a pseudo-UCH domain. This ubiquitin C-terminal hydrolase (UCH)-like or ubiquitin specific protease (USP)-like domain is predicted to be catalytically inactive because it lacks the active site catalytic triad characteristic of thiol proteases, with residues at the equivalent structural positions that are incompatible with catalysis, and it cannot bind ubiquitin. It functions as a structural scaffold for intra- and intermolecular interactions in the complex.</text>
</comment>
<comment type="domain">
    <text evidence="1">The linker, or PAN3 interaction domain (PID), between the WD40 repeats and the pseudo-UCH domain mediates interaction with PAN3.</text>
</comment>
<comment type="similarity">
    <text evidence="1">Belongs to the peptidase C19 family. PAN2 subfamily.</text>
</comment>
<proteinExistence type="evidence at protein level"/>
<organism>
    <name type="scientific">Drosophila melanogaster</name>
    <name type="common">Fruit fly</name>
    <dbReference type="NCBI Taxonomy" id="7227"/>
    <lineage>
        <taxon>Eukaryota</taxon>
        <taxon>Metazoa</taxon>
        <taxon>Ecdysozoa</taxon>
        <taxon>Arthropoda</taxon>
        <taxon>Hexapoda</taxon>
        <taxon>Insecta</taxon>
        <taxon>Pterygota</taxon>
        <taxon>Neoptera</taxon>
        <taxon>Endopterygota</taxon>
        <taxon>Diptera</taxon>
        <taxon>Brachycera</taxon>
        <taxon>Muscomorpha</taxon>
        <taxon>Ephydroidea</taxon>
        <taxon>Drosophilidae</taxon>
        <taxon>Drosophila</taxon>
        <taxon>Sophophora</taxon>
    </lineage>
</organism>
<keyword id="KW-0963">Cytoplasm</keyword>
<keyword id="KW-0269">Exonuclease</keyword>
<keyword id="KW-0378">Hydrolase</keyword>
<keyword id="KW-0479">Metal-binding</keyword>
<keyword id="KW-0507">mRNA processing</keyword>
<keyword id="KW-0540">Nuclease</keyword>
<keyword id="KW-0539">Nucleus</keyword>
<keyword id="KW-1185">Reference proteome</keyword>